<sequence>MGRFSEDSADEPDEREMSAALTVGEGDIDASLRPRSLGEFIGQPRVREQLQLVLEGAKNRGGTPDHILLSGPPGLGKTSLAMIIAAELGSSLRVTSGPALERAGDLAAMLSNLVEHDVLFIDEIHRIARPAEEMLYLAMEDFRVDVVVGKGPGATSIPLEVAPFTLVGATTRSGALTGPLRDRFGFTAHMDFYEPSELERVLARSAGILGIELGAEAGAEIARRSRGTPRIANRLLRRVRDYAEVRADGVITRDIAKYALEVYDVDELGLDRLDRAVLSALTRSFGGGPVGVSTLAVAVGEEATTVEEVCEPFLVRAGMIARTPRGRVATAQAWTHLGMKPPANAVGLGQTGLFD</sequence>
<protein>
    <recommendedName>
        <fullName evidence="1">Holliday junction branch migration complex subunit RuvB</fullName>
        <ecNumber evidence="1">3.6.4.-</ecNumber>
    </recommendedName>
</protein>
<organism>
    <name type="scientific">Mycolicibacterium vanbaalenii (strain DSM 7251 / JCM 13017 / BCRC 16820 / KCTC 9966 / NRRL B-24157 / PYR-1)</name>
    <name type="common">Mycobacterium vanbaalenii</name>
    <dbReference type="NCBI Taxonomy" id="350058"/>
    <lineage>
        <taxon>Bacteria</taxon>
        <taxon>Bacillati</taxon>
        <taxon>Actinomycetota</taxon>
        <taxon>Actinomycetes</taxon>
        <taxon>Mycobacteriales</taxon>
        <taxon>Mycobacteriaceae</taxon>
        <taxon>Mycolicibacterium</taxon>
    </lineage>
</organism>
<comment type="function">
    <text evidence="1">The RuvA-RuvB-RuvC complex processes Holliday junction (HJ) DNA during genetic recombination and DNA repair, while the RuvA-RuvB complex plays an important role in the rescue of blocked DNA replication forks via replication fork reversal (RFR). RuvA specifically binds to HJ cruciform DNA, conferring on it an open structure. The RuvB hexamer acts as an ATP-dependent pump, pulling dsDNA into and through the RuvAB complex. RuvB forms 2 homohexamers on either side of HJ DNA bound by 1 or 2 RuvA tetramers; 4 subunits per hexamer contact DNA at a time. Coordinated motions by a converter formed by DNA-disengaged RuvB subunits stimulates ATP hydrolysis and nucleotide exchange. Immobilization of the converter enables RuvB to convert the ATP-contained energy into a lever motion, pulling 2 nucleotides of DNA out of the RuvA tetramer per ATP hydrolyzed, thus driving DNA branch migration. The RuvB motors rotate together with the DNA substrate, which together with the progressing nucleotide cycle form the mechanistic basis for DNA recombination by continuous HJ branch migration. Branch migration allows RuvC to scan DNA until it finds its consensus sequence, where it cleaves and resolves cruciform DNA.</text>
</comment>
<comment type="catalytic activity">
    <reaction evidence="1">
        <text>ATP + H2O = ADP + phosphate + H(+)</text>
        <dbReference type="Rhea" id="RHEA:13065"/>
        <dbReference type="ChEBI" id="CHEBI:15377"/>
        <dbReference type="ChEBI" id="CHEBI:15378"/>
        <dbReference type="ChEBI" id="CHEBI:30616"/>
        <dbReference type="ChEBI" id="CHEBI:43474"/>
        <dbReference type="ChEBI" id="CHEBI:456216"/>
    </reaction>
</comment>
<comment type="subunit">
    <text evidence="1">Homohexamer. Forms an RuvA(8)-RuvB(12)-Holliday junction (HJ) complex. HJ DNA is sandwiched between 2 RuvA tetramers; dsDNA enters through RuvA and exits via RuvB. An RuvB hexamer assembles on each DNA strand where it exits the tetramer. Each RuvB hexamer is contacted by two RuvA subunits (via domain III) on 2 adjacent RuvB subunits; this complex drives branch migration. In the full resolvosome a probable DNA-RuvA(4)-RuvB(12)-RuvC(2) complex forms which resolves the HJ.</text>
</comment>
<comment type="subcellular location">
    <subcellularLocation>
        <location evidence="1">Cytoplasm</location>
    </subcellularLocation>
</comment>
<comment type="domain">
    <text evidence="1">Has 3 domains, the large (RuvB-L) and small ATPase (RuvB-S) domains and the C-terminal head (RuvB-H) domain. The head domain binds DNA, while the ATPase domains jointly bind ATP, ADP or are empty depending on the state of the subunit in the translocation cycle. During a single DNA translocation step the structure of each domain remains the same, but their relative positions change.</text>
</comment>
<comment type="similarity">
    <text evidence="1">Belongs to the RuvB family.</text>
</comment>
<gene>
    <name evidence="1" type="primary">ruvB</name>
    <name type="ordered locus">Mvan_2575</name>
</gene>
<reference key="1">
    <citation type="submission" date="2006-12" db="EMBL/GenBank/DDBJ databases">
        <title>Complete sequence of Mycobacterium vanbaalenii PYR-1.</title>
        <authorList>
            <consortium name="US DOE Joint Genome Institute"/>
            <person name="Copeland A."/>
            <person name="Lucas S."/>
            <person name="Lapidus A."/>
            <person name="Barry K."/>
            <person name="Detter J.C."/>
            <person name="Glavina del Rio T."/>
            <person name="Hammon N."/>
            <person name="Israni S."/>
            <person name="Dalin E."/>
            <person name="Tice H."/>
            <person name="Pitluck S."/>
            <person name="Singan V."/>
            <person name="Schmutz J."/>
            <person name="Larimer F."/>
            <person name="Land M."/>
            <person name="Hauser L."/>
            <person name="Kyrpides N."/>
            <person name="Anderson I.J."/>
            <person name="Miller C."/>
            <person name="Richardson P."/>
        </authorList>
    </citation>
    <scope>NUCLEOTIDE SEQUENCE [LARGE SCALE GENOMIC DNA]</scope>
    <source>
        <strain>DSM 7251 / JCM 13017 / BCRC 16820 / KCTC 9966 / NRRL B-24157 / PYR-1</strain>
    </source>
</reference>
<accession>A1T884</accession>
<keyword id="KW-0067">ATP-binding</keyword>
<keyword id="KW-0963">Cytoplasm</keyword>
<keyword id="KW-0227">DNA damage</keyword>
<keyword id="KW-0233">DNA recombination</keyword>
<keyword id="KW-0234">DNA repair</keyword>
<keyword id="KW-0238">DNA-binding</keyword>
<keyword id="KW-0378">Hydrolase</keyword>
<keyword id="KW-0547">Nucleotide-binding</keyword>
<evidence type="ECO:0000255" key="1">
    <source>
        <dbReference type="HAMAP-Rule" id="MF_00016"/>
    </source>
</evidence>
<dbReference type="EC" id="3.6.4.-" evidence="1"/>
<dbReference type="EMBL" id="CP000511">
    <property type="protein sequence ID" value="ABM13384.1"/>
    <property type="molecule type" value="Genomic_DNA"/>
</dbReference>
<dbReference type="RefSeq" id="WP_011779793.1">
    <property type="nucleotide sequence ID" value="NZ_JACKSD010000179.1"/>
</dbReference>
<dbReference type="SMR" id="A1T884"/>
<dbReference type="STRING" id="350058.Mvan_2575"/>
<dbReference type="KEGG" id="mva:Mvan_2575"/>
<dbReference type="eggNOG" id="COG2255">
    <property type="taxonomic scope" value="Bacteria"/>
</dbReference>
<dbReference type="HOGENOM" id="CLU_055599_1_0_11"/>
<dbReference type="Proteomes" id="UP000009159">
    <property type="component" value="Chromosome"/>
</dbReference>
<dbReference type="GO" id="GO:0005737">
    <property type="term" value="C:cytoplasm"/>
    <property type="evidence" value="ECO:0007669"/>
    <property type="project" value="UniProtKB-SubCell"/>
</dbReference>
<dbReference type="GO" id="GO:0048476">
    <property type="term" value="C:Holliday junction resolvase complex"/>
    <property type="evidence" value="ECO:0007669"/>
    <property type="project" value="UniProtKB-UniRule"/>
</dbReference>
<dbReference type="GO" id="GO:0005524">
    <property type="term" value="F:ATP binding"/>
    <property type="evidence" value="ECO:0007669"/>
    <property type="project" value="UniProtKB-UniRule"/>
</dbReference>
<dbReference type="GO" id="GO:0016887">
    <property type="term" value="F:ATP hydrolysis activity"/>
    <property type="evidence" value="ECO:0007669"/>
    <property type="project" value="InterPro"/>
</dbReference>
<dbReference type="GO" id="GO:0000400">
    <property type="term" value="F:four-way junction DNA binding"/>
    <property type="evidence" value="ECO:0007669"/>
    <property type="project" value="UniProtKB-UniRule"/>
</dbReference>
<dbReference type="GO" id="GO:0009378">
    <property type="term" value="F:four-way junction helicase activity"/>
    <property type="evidence" value="ECO:0007669"/>
    <property type="project" value="InterPro"/>
</dbReference>
<dbReference type="GO" id="GO:0006310">
    <property type="term" value="P:DNA recombination"/>
    <property type="evidence" value="ECO:0007669"/>
    <property type="project" value="UniProtKB-UniRule"/>
</dbReference>
<dbReference type="GO" id="GO:0006281">
    <property type="term" value="P:DNA repair"/>
    <property type="evidence" value="ECO:0007669"/>
    <property type="project" value="UniProtKB-UniRule"/>
</dbReference>
<dbReference type="CDD" id="cd00009">
    <property type="entry name" value="AAA"/>
    <property type="match status" value="1"/>
</dbReference>
<dbReference type="Gene3D" id="1.10.8.60">
    <property type="match status" value="1"/>
</dbReference>
<dbReference type="Gene3D" id="3.40.50.300">
    <property type="entry name" value="P-loop containing nucleotide triphosphate hydrolases"/>
    <property type="match status" value="1"/>
</dbReference>
<dbReference type="Gene3D" id="1.10.10.10">
    <property type="entry name" value="Winged helix-like DNA-binding domain superfamily/Winged helix DNA-binding domain"/>
    <property type="match status" value="1"/>
</dbReference>
<dbReference type="HAMAP" id="MF_00016">
    <property type="entry name" value="DNA_HJ_migration_RuvB"/>
    <property type="match status" value="1"/>
</dbReference>
<dbReference type="InterPro" id="IPR003593">
    <property type="entry name" value="AAA+_ATPase"/>
</dbReference>
<dbReference type="InterPro" id="IPR041445">
    <property type="entry name" value="AAA_lid_4"/>
</dbReference>
<dbReference type="InterPro" id="IPR004605">
    <property type="entry name" value="DNA_helicase_Holl-junc_RuvB"/>
</dbReference>
<dbReference type="InterPro" id="IPR027417">
    <property type="entry name" value="P-loop_NTPase"/>
</dbReference>
<dbReference type="InterPro" id="IPR008824">
    <property type="entry name" value="RuvB-like_N"/>
</dbReference>
<dbReference type="InterPro" id="IPR008823">
    <property type="entry name" value="RuvB_C"/>
</dbReference>
<dbReference type="InterPro" id="IPR036388">
    <property type="entry name" value="WH-like_DNA-bd_sf"/>
</dbReference>
<dbReference type="InterPro" id="IPR036390">
    <property type="entry name" value="WH_DNA-bd_sf"/>
</dbReference>
<dbReference type="NCBIfam" id="NF000868">
    <property type="entry name" value="PRK00080.1"/>
    <property type="match status" value="1"/>
</dbReference>
<dbReference type="NCBIfam" id="TIGR00635">
    <property type="entry name" value="ruvB"/>
    <property type="match status" value="1"/>
</dbReference>
<dbReference type="PANTHER" id="PTHR42848">
    <property type="match status" value="1"/>
</dbReference>
<dbReference type="PANTHER" id="PTHR42848:SF1">
    <property type="entry name" value="HOLLIDAY JUNCTION BRANCH MIGRATION COMPLEX SUBUNIT RUVB"/>
    <property type="match status" value="1"/>
</dbReference>
<dbReference type="Pfam" id="PF17864">
    <property type="entry name" value="AAA_lid_4"/>
    <property type="match status" value="1"/>
</dbReference>
<dbReference type="Pfam" id="PF05491">
    <property type="entry name" value="RuvB_C"/>
    <property type="match status" value="1"/>
</dbReference>
<dbReference type="Pfam" id="PF05496">
    <property type="entry name" value="RuvB_N"/>
    <property type="match status" value="1"/>
</dbReference>
<dbReference type="SMART" id="SM00382">
    <property type="entry name" value="AAA"/>
    <property type="match status" value="1"/>
</dbReference>
<dbReference type="SUPFAM" id="SSF52540">
    <property type="entry name" value="P-loop containing nucleoside triphosphate hydrolases"/>
    <property type="match status" value="1"/>
</dbReference>
<dbReference type="SUPFAM" id="SSF46785">
    <property type="entry name" value="Winged helix' DNA-binding domain"/>
    <property type="match status" value="1"/>
</dbReference>
<proteinExistence type="inferred from homology"/>
<name>RUVB_MYCVP</name>
<feature type="chain" id="PRO_0000322820" description="Holliday junction branch migration complex subunit RuvB">
    <location>
        <begin position="1"/>
        <end position="355"/>
    </location>
</feature>
<feature type="region of interest" description="Large ATPase domain (RuvB-L)" evidence="1">
    <location>
        <begin position="1"/>
        <end position="193"/>
    </location>
</feature>
<feature type="region of interest" description="Small ATPAse domain (RuvB-S)" evidence="1">
    <location>
        <begin position="194"/>
        <end position="264"/>
    </location>
</feature>
<feature type="region of interest" description="Head domain (RuvB-H)" evidence="1">
    <location>
        <begin position="267"/>
        <end position="355"/>
    </location>
</feature>
<feature type="binding site" evidence="1">
    <location>
        <position position="32"/>
    </location>
    <ligand>
        <name>ATP</name>
        <dbReference type="ChEBI" id="CHEBI:30616"/>
    </ligand>
</feature>
<feature type="binding site" evidence="1">
    <location>
        <position position="33"/>
    </location>
    <ligand>
        <name>ATP</name>
        <dbReference type="ChEBI" id="CHEBI:30616"/>
    </ligand>
</feature>
<feature type="binding site" evidence="1">
    <location>
        <position position="74"/>
    </location>
    <ligand>
        <name>ATP</name>
        <dbReference type="ChEBI" id="CHEBI:30616"/>
    </ligand>
</feature>
<feature type="binding site" evidence="1">
    <location>
        <position position="77"/>
    </location>
    <ligand>
        <name>ATP</name>
        <dbReference type="ChEBI" id="CHEBI:30616"/>
    </ligand>
</feature>
<feature type="binding site" evidence="1">
    <location>
        <position position="78"/>
    </location>
    <ligand>
        <name>ATP</name>
        <dbReference type="ChEBI" id="CHEBI:30616"/>
    </ligand>
</feature>
<feature type="binding site" evidence="1">
    <location>
        <position position="78"/>
    </location>
    <ligand>
        <name>Mg(2+)</name>
        <dbReference type="ChEBI" id="CHEBI:18420"/>
    </ligand>
</feature>
<feature type="binding site" evidence="1">
    <location>
        <position position="79"/>
    </location>
    <ligand>
        <name>ATP</name>
        <dbReference type="ChEBI" id="CHEBI:30616"/>
    </ligand>
</feature>
<feature type="binding site" evidence="1">
    <location>
        <begin position="140"/>
        <end position="142"/>
    </location>
    <ligand>
        <name>ATP</name>
        <dbReference type="ChEBI" id="CHEBI:30616"/>
    </ligand>
</feature>
<feature type="binding site" evidence="1">
    <location>
        <position position="183"/>
    </location>
    <ligand>
        <name>ATP</name>
        <dbReference type="ChEBI" id="CHEBI:30616"/>
    </ligand>
</feature>
<feature type="binding site" evidence="1">
    <location>
        <position position="193"/>
    </location>
    <ligand>
        <name>ATP</name>
        <dbReference type="ChEBI" id="CHEBI:30616"/>
    </ligand>
</feature>
<feature type="binding site" evidence="1">
    <location>
        <position position="230"/>
    </location>
    <ligand>
        <name>ATP</name>
        <dbReference type="ChEBI" id="CHEBI:30616"/>
    </ligand>
</feature>
<feature type="binding site" evidence="1">
    <location>
        <position position="322"/>
    </location>
    <ligand>
        <name>DNA</name>
        <dbReference type="ChEBI" id="CHEBI:16991"/>
    </ligand>
</feature>
<feature type="binding site" evidence="1">
    <location>
        <position position="327"/>
    </location>
    <ligand>
        <name>DNA</name>
        <dbReference type="ChEBI" id="CHEBI:16991"/>
    </ligand>
</feature>